<feature type="signal peptide" evidence="3">
    <location>
        <begin position="1"/>
        <end position="23"/>
    </location>
</feature>
<feature type="chain" id="PRO_0000013099" description="Putative secretin GspD">
    <location>
        <begin position="24"/>
        <end position="650"/>
    </location>
</feature>
<feature type="region of interest" description="N0" evidence="8">
    <location>
        <begin position="24"/>
        <end position="122"/>
    </location>
</feature>
<feature type="region of interest" description="N1" evidence="8">
    <location>
        <begin position="124"/>
        <end position="188"/>
    </location>
</feature>
<feature type="region of interest" description="N2" evidence="8">
    <location>
        <begin position="189"/>
        <end position="263"/>
    </location>
</feature>
<feature type="region of interest" description="N3" evidence="8">
    <location>
        <begin position="266"/>
        <end position="342"/>
    </location>
</feature>
<feature type="region of interest" description="Secretin" evidence="8">
    <location>
        <begin position="345"/>
        <end position="596"/>
    </location>
</feature>
<feature type="region of interest" description="S domain" evidence="8">
    <location>
        <begin position="598"/>
        <end position="650"/>
    </location>
</feature>
<feature type="site" description="May serve as a pivot that allows opening of the central gate for substrate egress" evidence="2">
    <location>
        <position position="461"/>
    </location>
</feature>
<feature type="strand" evidence="10">
    <location>
        <begin position="126"/>
        <end position="131"/>
    </location>
</feature>
<feature type="strand" evidence="10">
    <location>
        <begin position="133"/>
        <end position="135"/>
    </location>
</feature>
<feature type="helix" evidence="10">
    <location>
        <begin position="137"/>
        <end position="140"/>
    </location>
</feature>
<feature type="helix" evidence="10">
    <location>
        <begin position="141"/>
        <end position="148"/>
    </location>
</feature>
<feature type="strand" evidence="10">
    <location>
        <begin position="151"/>
        <end position="153"/>
    </location>
</feature>
<feature type="strand" evidence="10">
    <location>
        <begin position="156"/>
        <end position="159"/>
    </location>
</feature>
<feature type="strand" evidence="10">
    <location>
        <begin position="164"/>
        <end position="169"/>
    </location>
</feature>
<feature type="helix" evidence="10">
    <location>
        <begin position="171"/>
        <end position="186"/>
    </location>
</feature>
<feature type="strand" evidence="10">
    <location>
        <begin position="193"/>
        <end position="196"/>
    </location>
</feature>
<feature type="helix" evidence="10">
    <location>
        <begin position="202"/>
        <end position="210"/>
    </location>
</feature>
<feature type="strand" evidence="10">
    <location>
        <begin position="230"/>
        <end position="232"/>
    </location>
</feature>
<feature type="strand" evidence="10">
    <location>
        <begin position="234"/>
        <end position="236"/>
    </location>
</feature>
<feature type="strand" evidence="10">
    <location>
        <begin position="238"/>
        <end position="241"/>
    </location>
</feature>
<feature type="helix" evidence="10">
    <location>
        <begin position="245"/>
        <end position="257"/>
    </location>
</feature>
<feature type="strand" evidence="10">
    <location>
        <begin position="267"/>
        <end position="272"/>
    </location>
</feature>
<feature type="strand" evidence="10">
    <location>
        <begin position="274"/>
        <end position="276"/>
    </location>
</feature>
<feature type="helix" evidence="10">
    <location>
        <begin position="278"/>
        <end position="289"/>
    </location>
</feature>
<feature type="strand" evidence="10">
    <location>
        <begin position="312"/>
        <end position="316"/>
    </location>
</feature>
<feature type="turn" evidence="10">
    <location>
        <begin position="317"/>
        <end position="320"/>
    </location>
</feature>
<feature type="strand" evidence="10">
    <location>
        <begin position="321"/>
        <end position="325"/>
    </location>
</feature>
<feature type="helix" evidence="10">
    <location>
        <begin position="328"/>
        <end position="341"/>
    </location>
</feature>
<feature type="strand" evidence="10">
    <location>
        <begin position="347"/>
        <end position="371"/>
    </location>
</feature>
<feature type="turn" evidence="10">
    <location>
        <begin position="372"/>
        <end position="374"/>
    </location>
</feature>
<feature type="strand" evidence="10">
    <location>
        <begin position="375"/>
        <end position="378"/>
    </location>
</feature>
<feature type="strand" evidence="10">
    <location>
        <begin position="382"/>
        <end position="384"/>
    </location>
</feature>
<feature type="helix" evidence="10">
    <location>
        <begin position="386"/>
        <end position="399"/>
    </location>
</feature>
<feature type="helix" evidence="10">
    <location>
        <begin position="409"/>
        <end position="413"/>
    </location>
</feature>
<feature type="strand" evidence="10">
    <location>
        <begin position="417"/>
        <end position="424"/>
    </location>
</feature>
<feature type="strand" evidence="10">
    <location>
        <begin position="427"/>
        <end position="451"/>
    </location>
</feature>
<feature type="strand" evidence="10">
    <location>
        <begin position="456"/>
        <end position="467"/>
    </location>
</feature>
<feature type="strand" evidence="10">
    <location>
        <begin position="482"/>
        <end position="496"/>
    </location>
</feature>
<feature type="strand" evidence="10">
    <location>
        <begin position="499"/>
        <end position="501"/>
    </location>
</feature>
<feature type="strand" evidence="10">
    <location>
        <begin position="504"/>
        <end position="514"/>
    </location>
</feature>
<feature type="strand" evidence="10">
    <location>
        <begin position="516"/>
        <end position="518"/>
    </location>
</feature>
<feature type="strand" evidence="10">
    <location>
        <begin position="526"/>
        <end position="536"/>
    </location>
</feature>
<feature type="strand" evidence="10">
    <location>
        <begin position="543"/>
        <end position="559"/>
    </location>
</feature>
<feature type="helix" evidence="10">
    <location>
        <begin position="563"/>
        <end position="565"/>
    </location>
</feature>
<feature type="helix" evidence="10">
    <location>
        <begin position="569"/>
        <end position="572"/>
    </location>
</feature>
<feature type="strand" evidence="10">
    <location>
        <begin position="575"/>
        <end position="594"/>
    </location>
</feature>
<feature type="helix" evidence="10">
    <location>
        <begin position="597"/>
        <end position="621"/>
    </location>
</feature>
<evidence type="ECO:0000250" key="1">
    <source>
        <dbReference type="UniProtKB" id="E3PJ86"/>
    </source>
</evidence>
<evidence type="ECO:0000250" key="2">
    <source>
        <dbReference type="UniProtKB" id="P45779"/>
    </source>
</evidence>
<evidence type="ECO:0000255" key="3"/>
<evidence type="ECO:0000269" key="4">
    <source>
    </source>
</evidence>
<evidence type="ECO:0000269" key="5">
    <source>
    </source>
</evidence>
<evidence type="ECO:0000303" key="6">
    <source>
    </source>
</evidence>
<evidence type="ECO:0000305" key="7"/>
<evidence type="ECO:0000305" key="8">
    <source>
    </source>
</evidence>
<evidence type="ECO:0007744" key="9">
    <source>
        <dbReference type="PDB" id="5WQ7"/>
    </source>
</evidence>
<evidence type="ECO:0007829" key="10">
    <source>
        <dbReference type="PDB" id="5WQ7"/>
    </source>
</evidence>
<keyword id="KW-0002">3D-structure</keyword>
<keyword id="KW-0998">Cell outer membrane</keyword>
<keyword id="KW-0472">Membrane</keyword>
<keyword id="KW-0653">Protein transport</keyword>
<keyword id="KW-1185">Reference proteome</keyword>
<keyword id="KW-0732">Signal</keyword>
<keyword id="KW-0812">Transmembrane</keyword>
<keyword id="KW-1134">Transmembrane beta strand</keyword>
<keyword id="KW-0813">Transport</keyword>
<comment type="function">
    <text evidence="1">Involved in a type II secretion system (T2SS, formerly general secretion pathway, GSP) for the export of folded proteins across the outer membrane. This subunit would form the outer membrane channel.</text>
</comment>
<comment type="subunit">
    <text evidence="5">Forms a cylindrical channel with 15 subunits; approximately 25% of the particles have 16-subunit channels. Closed pentadeacameric channels are 180 Angstroms long and 145 Angstroms in diameter. Each subunit turns in a clock-wise manner around the channel.</text>
</comment>
<comment type="interaction">
    <interactant intactId="EBI-21225187">
        <id>P45758</id>
    </interactant>
    <interactant intactId="EBI-21225187">
        <id>P45758</id>
        <label>gspD</label>
    </interactant>
    <organismsDiffer>false</organismsDiffer>
    <experiments>3</experiments>
</comment>
<comment type="subcellular location">
    <subcellularLocation>
        <location evidence="8">Cell outer membrane</location>
    </subcellularLocation>
    <text evidence="8">Most of the protein is in the periplasm which it traverses to contact proteins of the cell inner membrane.</text>
</comment>
<comment type="induction">
    <text evidence="4">Silenced by the DNA-binding protein H-NS under standard growth conditions.</text>
</comment>
<comment type="domain">
    <text evidence="5">The N0, N1, N2 and N3 domains are periplasmic, while the secretin and S domains form a channel that is partially inserted in the outer membrane. The N1, N2 and N3 domains each form a periplasmic ring; the N0 domain was present but not resolved by electron microscopy. The secretin domain forms a double beta-barrel structure; the outer barrel has a diameter of about 110 Angstroms while the inner barrel forms the central gate with a small pore in the closed state.</text>
</comment>
<comment type="miscellaneous">
    <text>Part of a cryptic operon that encodes proteins involved in type II secretion machinery in other organisms, but is not expressed in strain K12.</text>
</comment>
<comment type="similarity">
    <text evidence="7">Belongs to the bacterial secretin family. GSP D subfamily.</text>
</comment>
<comment type="sequence caution" evidence="7">
    <conflict type="erroneous initiation">
        <sequence resource="EMBL-CDS" id="AAA58122"/>
    </conflict>
    <text>Extended N-terminus.</text>
</comment>
<accession>P45758</accession>
<accession>Q2M6Z0</accession>
<proteinExistence type="evidence at protein level"/>
<reference key="1">
    <citation type="journal article" date="1997" name="Science">
        <title>The complete genome sequence of Escherichia coli K-12.</title>
        <authorList>
            <person name="Blattner F.R."/>
            <person name="Plunkett G. III"/>
            <person name="Bloch C.A."/>
            <person name="Perna N.T."/>
            <person name="Burland V."/>
            <person name="Riley M."/>
            <person name="Collado-Vides J."/>
            <person name="Glasner J.D."/>
            <person name="Rode C.K."/>
            <person name="Mayhew G.F."/>
            <person name="Gregor J."/>
            <person name="Davis N.W."/>
            <person name="Kirkpatrick H.A."/>
            <person name="Goeden M.A."/>
            <person name="Rose D.J."/>
            <person name="Mau B."/>
            <person name="Shao Y."/>
        </authorList>
    </citation>
    <scope>NUCLEOTIDE SEQUENCE [LARGE SCALE GENOMIC DNA]</scope>
    <source>
        <strain>K12 / MG1655 / ATCC 47076</strain>
    </source>
</reference>
<reference key="2">
    <citation type="journal article" date="2006" name="Mol. Syst. Biol.">
        <title>Highly accurate genome sequences of Escherichia coli K-12 strains MG1655 and W3110.</title>
        <authorList>
            <person name="Hayashi K."/>
            <person name="Morooka N."/>
            <person name="Yamamoto Y."/>
            <person name="Fujita K."/>
            <person name="Isono K."/>
            <person name="Choi S."/>
            <person name="Ohtsubo E."/>
            <person name="Baba T."/>
            <person name="Wanner B.L."/>
            <person name="Mori H."/>
            <person name="Horiuchi T."/>
        </authorList>
    </citation>
    <scope>NUCLEOTIDE SEQUENCE [LARGE SCALE GENOMIC DNA]</scope>
    <source>
        <strain>K12 / W3110 / ATCC 27325 / DSM 5911</strain>
    </source>
</reference>
<reference key="3">
    <citation type="journal article" date="1996" name="J. Bacteriol.">
        <title>The cryptic general secretory pathway (gsp) operon of Escherichia coli K-12 encodes functional proteins.</title>
        <authorList>
            <person name="Francetic O."/>
            <person name="Pugsley A.P."/>
        </authorList>
    </citation>
    <scope>LACK OF EXPRESSION</scope>
    <source>
        <strain>K12 / MC4100 / ATCC 35695 / DSM 6574</strain>
    </source>
</reference>
<reference key="4">
    <citation type="journal article" date="2000" name="EMBO J.">
        <title>Expression of the endogenous type II secretion pathway in Escherichia coli leads to chitinase secretion.</title>
        <authorList>
            <person name="Francetic O."/>
            <person name="Belin D."/>
            <person name="Badaut C."/>
            <person name="Pugsley A.P."/>
        </authorList>
    </citation>
    <scope>LACK OF EXPRESSION</scope>
    <scope>TRANSCRIPTIONAL REGULATION</scope>
    <source>
        <strain>K12 / MC4100 / ATCC 35695 / DSM 6574</strain>
    </source>
</reference>
<reference evidence="9" key="5">
    <citation type="journal article" date="2017" name="Nat. Struct. Mol. Biol.">
        <title>Structural insights into the secretin translocation channel in the type II secretion system.</title>
        <authorList>
            <person name="Yan Z."/>
            <person name="Yin M."/>
            <person name="Xu D."/>
            <person name="Zhu Y."/>
            <person name="Li X."/>
        </authorList>
    </citation>
    <scope>STRUCTURE BY ELECTRON MICROSCOPY (3.04 ANGSTROMS) OF 24-650</scope>
    <scope>SUBCELLULAR LOCATION</scope>
    <scope>DOMAIN</scope>
    <source>
        <strain>K12 / DH5-alpha</strain>
    </source>
</reference>
<organism>
    <name type="scientific">Escherichia coli (strain K12)</name>
    <dbReference type="NCBI Taxonomy" id="83333"/>
    <lineage>
        <taxon>Bacteria</taxon>
        <taxon>Pseudomonadati</taxon>
        <taxon>Pseudomonadota</taxon>
        <taxon>Gammaproteobacteria</taxon>
        <taxon>Enterobacterales</taxon>
        <taxon>Enterobacteriaceae</taxon>
        <taxon>Escherichia</taxon>
    </lineage>
</organism>
<name>GSPD_ECOLI</name>
<gene>
    <name type="primary">gspD</name>
    <name type="synonym">yheF</name>
    <name type="ordered locus">b3325</name>
    <name type="ordered locus">JW5707</name>
</gene>
<sequence>MKGLNKITCCLLAALLMPCAGHAENEQYGANFNNADIRQFVEIVGQHLGKTILIDPSVQGTISVRSNDTFSQQEYYQFFLSILDLYGYSVITLDNGFLKVVRSANVKTSPGMIADSSRPGVGDELVTRIVPLENVPARDLAPLLRQMMDAGSVGNVVHYEPSNVLILTGRASTINKLIEVIKRVDVIGTEKQQIIHLEYASAEDLAEILNQLISESHGKSQMPALLSAKIVADKRTNSLIISGPEKARQRITSLLKSLDVEESEEGNTRVYYLKYAKATNLVEVLTGVSEKLKDEKGNARKPSSSGAMDNVAITADEQTNSLVITADQSVQEKLATVIARLDIRRAQVLVEAIIVEVQDGNGLNLGVQWANKNVGAQQFTNTGLPIFNAAQGVADYKKNGGITSANPAWDMFSAYNGMAAGFFNGDWGVLLTALASNNKNDILATPSIVTLDNKLASFNVGQDVPVLSGSQTTSGDNVFNTVERKTVGTKLKVTPQVNEGDAVLLEIEQEVSSVDSSSNSTLGPTFNTRTIQNAVLVKTGETVVLGGLLDDFSKEQVSKVPLLGDIPLVGQLFRYTSTERAKRNLMVFIRPTIIRDDDVYRSLSKEKYTRYRQEQQQRIDGKSKALVGSEDLPVLDENTFNSHAPAPSSR</sequence>
<protein>
    <recommendedName>
        <fullName evidence="6">Putative secretin GspD</fullName>
    </recommendedName>
    <alternativeName>
        <fullName>Putative general secretion pathway protein D</fullName>
    </alternativeName>
    <alternativeName>
        <fullName>Putative type II secretion system protein D</fullName>
        <shortName>T2SS protein D</shortName>
    </alternativeName>
</protein>
<dbReference type="EMBL" id="U18997">
    <property type="protein sequence ID" value="AAA58122.1"/>
    <property type="status" value="ALT_INIT"/>
    <property type="molecule type" value="Genomic_DNA"/>
</dbReference>
<dbReference type="EMBL" id="U00096">
    <property type="protein sequence ID" value="AAC76350.2"/>
    <property type="molecule type" value="Genomic_DNA"/>
</dbReference>
<dbReference type="EMBL" id="AP009048">
    <property type="protein sequence ID" value="BAE77966.1"/>
    <property type="molecule type" value="Genomic_DNA"/>
</dbReference>
<dbReference type="PIR" id="H65125">
    <property type="entry name" value="H65125"/>
</dbReference>
<dbReference type="RefSeq" id="NP_417784.4">
    <property type="nucleotide sequence ID" value="NC_000913.3"/>
</dbReference>
<dbReference type="RefSeq" id="WP_001326512.1">
    <property type="nucleotide sequence ID" value="NZ_SSZK01000040.1"/>
</dbReference>
<dbReference type="PDB" id="5WQ7">
    <property type="method" value="EM"/>
    <property type="resolution" value="3.04 A"/>
    <property type="chains" value="A/B/C/D/E/F/G/H/I/J/K/L/M/N/O=24-650"/>
</dbReference>
<dbReference type="PDBsum" id="5WQ7"/>
<dbReference type="EMDB" id="EMD-6675"/>
<dbReference type="SMR" id="P45758"/>
<dbReference type="BioGRID" id="4261297">
    <property type="interactions" value="296"/>
</dbReference>
<dbReference type="FunCoup" id="P45758">
    <property type="interactions" value="217"/>
</dbReference>
<dbReference type="STRING" id="511145.b3325"/>
<dbReference type="TCDB" id="1.B.22.1.3">
    <property type="family name" value="the outer bacterial membrane secretin (secretin) family"/>
</dbReference>
<dbReference type="PaxDb" id="511145-b3325"/>
<dbReference type="EnsemblBacteria" id="AAC76350">
    <property type="protein sequence ID" value="AAC76350"/>
    <property type="gene ID" value="b3325"/>
</dbReference>
<dbReference type="GeneID" id="947822"/>
<dbReference type="KEGG" id="ecj:JW5707"/>
<dbReference type="KEGG" id="eco:b3325"/>
<dbReference type="KEGG" id="ecoc:C3026_18065"/>
<dbReference type="PATRIC" id="fig|1411691.4.peg.3406"/>
<dbReference type="EchoBASE" id="EB2727"/>
<dbReference type="eggNOG" id="COG1450">
    <property type="taxonomic scope" value="Bacteria"/>
</dbReference>
<dbReference type="HOGENOM" id="CLU_006756_1_1_6"/>
<dbReference type="InParanoid" id="P45758"/>
<dbReference type="OMA" id="TFNVGQE"/>
<dbReference type="OrthoDB" id="9779724at2"/>
<dbReference type="PhylomeDB" id="P45758"/>
<dbReference type="BioCyc" id="EcoCyc:G7703-MONOMER"/>
<dbReference type="BioCyc" id="MetaCyc:G7703-MONOMER"/>
<dbReference type="PRO" id="PR:P45758"/>
<dbReference type="Proteomes" id="UP000000625">
    <property type="component" value="Chromosome"/>
</dbReference>
<dbReference type="GO" id="GO:0009279">
    <property type="term" value="C:cell outer membrane"/>
    <property type="evidence" value="ECO:0007669"/>
    <property type="project" value="UniProtKB-SubCell"/>
</dbReference>
<dbReference type="GO" id="GO:0015627">
    <property type="term" value="C:type II protein secretion system complex"/>
    <property type="evidence" value="ECO:0000318"/>
    <property type="project" value="GO_Central"/>
</dbReference>
<dbReference type="GO" id="GO:0042802">
    <property type="term" value="F:identical protein binding"/>
    <property type="evidence" value="ECO:0000353"/>
    <property type="project" value="IntAct"/>
</dbReference>
<dbReference type="GO" id="GO:0009306">
    <property type="term" value="P:protein secretion"/>
    <property type="evidence" value="ECO:0000318"/>
    <property type="project" value="GO_Central"/>
</dbReference>
<dbReference type="GO" id="GO:0015628">
    <property type="term" value="P:protein secretion by the type II secretion system"/>
    <property type="evidence" value="ECO:0007669"/>
    <property type="project" value="InterPro"/>
</dbReference>
<dbReference type="Gene3D" id="3.30.1370.120">
    <property type="match status" value="3"/>
</dbReference>
<dbReference type="InterPro" id="IPR050810">
    <property type="entry name" value="Bact_Secretion_Sys_Channel"/>
</dbReference>
<dbReference type="InterPro" id="IPR049371">
    <property type="entry name" value="GspD-like_N0"/>
</dbReference>
<dbReference type="InterPro" id="IPR001775">
    <property type="entry name" value="GspD/PilQ"/>
</dbReference>
<dbReference type="InterPro" id="IPR005644">
    <property type="entry name" value="NolW-like"/>
</dbReference>
<dbReference type="InterPro" id="IPR038591">
    <property type="entry name" value="NolW-like_sf"/>
</dbReference>
<dbReference type="InterPro" id="IPR004846">
    <property type="entry name" value="T2SS/T3SS_dom"/>
</dbReference>
<dbReference type="InterPro" id="IPR013356">
    <property type="entry name" value="T2SS_GspD"/>
</dbReference>
<dbReference type="InterPro" id="IPR004845">
    <property type="entry name" value="T2SS_GspD_CS"/>
</dbReference>
<dbReference type="NCBIfam" id="TIGR02517">
    <property type="entry name" value="type_II_gspD"/>
    <property type="match status" value="1"/>
</dbReference>
<dbReference type="PANTHER" id="PTHR30332">
    <property type="entry name" value="PROBABLE GENERAL SECRETION PATHWAY PROTEIN D"/>
    <property type="match status" value="1"/>
</dbReference>
<dbReference type="PANTHER" id="PTHR30332:SF24">
    <property type="entry name" value="SECRETIN GSPD-RELATED"/>
    <property type="match status" value="1"/>
</dbReference>
<dbReference type="Pfam" id="PF00263">
    <property type="entry name" value="Secretin"/>
    <property type="match status" value="1"/>
</dbReference>
<dbReference type="Pfam" id="PF03958">
    <property type="entry name" value="Secretin_N"/>
    <property type="match status" value="3"/>
</dbReference>
<dbReference type="Pfam" id="PF21305">
    <property type="entry name" value="type_II_gspD_N0"/>
    <property type="match status" value="1"/>
</dbReference>
<dbReference type="PRINTS" id="PR00811">
    <property type="entry name" value="BCTERIALGSPD"/>
</dbReference>
<dbReference type="PROSITE" id="PS00875">
    <property type="entry name" value="T2SP_D"/>
    <property type="match status" value="1"/>
</dbReference>